<sequence>MKIIKVTDLNLKDKKVLIRSDLNVPIKNGKIMCNMRIIKSLETINFVIKNEAKCVIVASHLGNPIEEKYDYNFSLTHIVNHMKKIIKYPIRLIQNYLNGFEAKEKEIIVLENVRFNPGERKNDKNLSKKYANLCDILVMDSFGSSHRSESSTTGIIKFAPISCIGLLFLKEIKYLKKALFNSKRPIVTIFGGSKISTKLGVIEKLSNISENVLVGGGIANTILFSKGHNIGKSLHDKNNISKIKKFLYKKNIIIPKDFIVTDNINKFSSYKEKSIKEIKNEDYIVDIGKKSCECFIKIIKKAKTIFWNGPLGLIEIKQFRNGTKEIANSVIHSSAKSIIGGGETVLAMRMFNFIDRFSYISTGGGAFLSFIEKQELPVLSELKKFKKYTNFKQN</sequence>
<keyword id="KW-0067">ATP-binding</keyword>
<keyword id="KW-0963">Cytoplasm</keyword>
<keyword id="KW-0324">Glycolysis</keyword>
<keyword id="KW-0418">Kinase</keyword>
<keyword id="KW-0547">Nucleotide-binding</keyword>
<keyword id="KW-1185">Reference proteome</keyword>
<keyword id="KW-0808">Transferase</keyword>
<feature type="chain" id="PRO_0000146043" description="Phosphoglycerate kinase">
    <location>
        <begin position="1"/>
        <end position="394"/>
    </location>
</feature>
<feature type="binding site" evidence="1">
    <location>
        <begin position="21"/>
        <end position="23"/>
    </location>
    <ligand>
        <name>substrate</name>
    </ligand>
</feature>
<feature type="binding site" evidence="1">
    <location>
        <position position="36"/>
    </location>
    <ligand>
        <name>substrate</name>
    </ligand>
</feature>
<feature type="binding site" evidence="1">
    <location>
        <begin position="60"/>
        <end position="63"/>
    </location>
    <ligand>
        <name>substrate</name>
    </ligand>
</feature>
<feature type="binding site" evidence="1">
    <location>
        <position position="114"/>
    </location>
    <ligand>
        <name>substrate</name>
    </ligand>
</feature>
<feature type="binding site" evidence="1">
    <location>
        <position position="147"/>
    </location>
    <ligand>
        <name>substrate</name>
    </ligand>
</feature>
<feature type="binding site" evidence="1">
    <location>
        <position position="198"/>
    </location>
    <ligand>
        <name>ATP</name>
        <dbReference type="ChEBI" id="CHEBI:30616"/>
    </ligand>
</feature>
<feature type="binding site" evidence="1">
    <location>
        <position position="315"/>
    </location>
    <ligand>
        <name>ATP</name>
        <dbReference type="ChEBI" id="CHEBI:30616"/>
    </ligand>
</feature>
<feature type="binding site" evidence="1">
    <location>
        <begin position="341"/>
        <end position="344"/>
    </location>
    <ligand>
        <name>ATP</name>
        <dbReference type="ChEBI" id="CHEBI:30616"/>
    </ligand>
</feature>
<reference key="1">
    <citation type="journal article" date="2002" name="Nat. Genet.">
        <title>Genome sequence of the endocellular obligate symbiont of tsetse flies, Wigglesworthia glossinidia.</title>
        <authorList>
            <person name="Akman L."/>
            <person name="Yamashita A."/>
            <person name="Watanabe H."/>
            <person name="Oshima K."/>
            <person name="Shiba T."/>
            <person name="Hattori M."/>
            <person name="Aksoy S."/>
        </authorList>
    </citation>
    <scope>NUCLEOTIDE SEQUENCE [LARGE SCALE GENOMIC DNA]</scope>
</reference>
<comment type="catalytic activity">
    <reaction evidence="1">
        <text>(2R)-3-phosphoglycerate + ATP = (2R)-3-phospho-glyceroyl phosphate + ADP</text>
        <dbReference type="Rhea" id="RHEA:14801"/>
        <dbReference type="ChEBI" id="CHEBI:30616"/>
        <dbReference type="ChEBI" id="CHEBI:57604"/>
        <dbReference type="ChEBI" id="CHEBI:58272"/>
        <dbReference type="ChEBI" id="CHEBI:456216"/>
        <dbReference type="EC" id="2.7.2.3"/>
    </reaction>
</comment>
<comment type="pathway">
    <text evidence="1">Carbohydrate degradation; glycolysis; pyruvate from D-glyceraldehyde 3-phosphate: step 2/5.</text>
</comment>
<comment type="subunit">
    <text evidence="1">Monomer.</text>
</comment>
<comment type="subcellular location">
    <subcellularLocation>
        <location evidence="1">Cytoplasm</location>
    </subcellularLocation>
</comment>
<comment type="similarity">
    <text evidence="1">Belongs to the phosphoglycerate kinase family.</text>
</comment>
<protein>
    <recommendedName>
        <fullName evidence="1">Phosphoglycerate kinase</fullName>
        <ecNumber evidence="1">2.7.2.3</ecNumber>
    </recommendedName>
</protein>
<evidence type="ECO:0000255" key="1">
    <source>
        <dbReference type="HAMAP-Rule" id="MF_00145"/>
    </source>
</evidence>
<gene>
    <name evidence="1" type="primary">pgk</name>
    <name type="ordered locus">WIGBR3050</name>
</gene>
<accession>Q8D2P9</accession>
<name>PGK_WIGBR</name>
<proteinExistence type="inferred from homology"/>
<organism>
    <name type="scientific">Wigglesworthia glossinidia brevipalpis</name>
    <dbReference type="NCBI Taxonomy" id="36870"/>
    <lineage>
        <taxon>Bacteria</taxon>
        <taxon>Pseudomonadati</taxon>
        <taxon>Pseudomonadota</taxon>
        <taxon>Gammaproteobacteria</taxon>
        <taxon>Enterobacterales</taxon>
        <taxon>Erwiniaceae</taxon>
        <taxon>Wigglesworthia</taxon>
    </lineage>
</organism>
<dbReference type="EC" id="2.7.2.3" evidence="1"/>
<dbReference type="EMBL" id="BA000021">
    <property type="protein sequence ID" value="BAC24451.1"/>
    <property type="molecule type" value="Genomic_DNA"/>
</dbReference>
<dbReference type="SMR" id="Q8D2P9"/>
<dbReference type="STRING" id="36870.gene:10368801"/>
<dbReference type="KEGG" id="wbr:pgk"/>
<dbReference type="eggNOG" id="COG0126">
    <property type="taxonomic scope" value="Bacteria"/>
</dbReference>
<dbReference type="HOGENOM" id="CLU_025427_0_2_6"/>
<dbReference type="OrthoDB" id="9808460at2"/>
<dbReference type="UniPathway" id="UPA00109">
    <property type="reaction ID" value="UER00185"/>
</dbReference>
<dbReference type="Proteomes" id="UP000000562">
    <property type="component" value="Chromosome"/>
</dbReference>
<dbReference type="GO" id="GO:0005829">
    <property type="term" value="C:cytosol"/>
    <property type="evidence" value="ECO:0007669"/>
    <property type="project" value="TreeGrafter"/>
</dbReference>
<dbReference type="GO" id="GO:0043531">
    <property type="term" value="F:ADP binding"/>
    <property type="evidence" value="ECO:0007669"/>
    <property type="project" value="TreeGrafter"/>
</dbReference>
<dbReference type="GO" id="GO:0005524">
    <property type="term" value="F:ATP binding"/>
    <property type="evidence" value="ECO:0007669"/>
    <property type="project" value="UniProtKB-KW"/>
</dbReference>
<dbReference type="GO" id="GO:0004618">
    <property type="term" value="F:phosphoglycerate kinase activity"/>
    <property type="evidence" value="ECO:0007669"/>
    <property type="project" value="UniProtKB-UniRule"/>
</dbReference>
<dbReference type="GO" id="GO:0006094">
    <property type="term" value="P:gluconeogenesis"/>
    <property type="evidence" value="ECO:0007669"/>
    <property type="project" value="TreeGrafter"/>
</dbReference>
<dbReference type="GO" id="GO:0006096">
    <property type="term" value="P:glycolytic process"/>
    <property type="evidence" value="ECO:0007669"/>
    <property type="project" value="UniProtKB-UniRule"/>
</dbReference>
<dbReference type="FunFam" id="3.40.50.1260:FF:000031">
    <property type="entry name" value="Phosphoglycerate kinase 1"/>
    <property type="match status" value="1"/>
</dbReference>
<dbReference type="Gene3D" id="3.40.50.1260">
    <property type="entry name" value="Phosphoglycerate kinase, N-terminal domain"/>
    <property type="match status" value="2"/>
</dbReference>
<dbReference type="HAMAP" id="MF_00145">
    <property type="entry name" value="Phosphoglyc_kinase"/>
    <property type="match status" value="1"/>
</dbReference>
<dbReference type="InterPro" id="IPR001576">
    <property type="entry name" value="Phosphoglycerate_kinase"/>
</dbReference>
<dbReference type="InterPro" id="IPR015911">
    <property type="entry name" value="Phosphoglycerate_kinase_CS"/>
</dbReference>
<dbReference type="InterPro" id="IPR015824">
    <property type="entry name" value="Phosphoglycerate_kinase_N"/>
</dbReference>
<dbReference type="InterPro" id="IPR036043">
    <property type="entry name" value="Phosphoglycerate_kinase_sf"/>
</dbReference>
<dbReference type="PANTHER" id="PTHR11406">
    <property type="entry name" value="PHOSPHOGLYCERATE KINASE"/>
    <property type="match status" value="1"/>
</dbReference>
<dbReference type="PANTHER" id="PTHR11406:SF23">
    <property type="entry name" value="PHOSPHOGLYCERATE KINASE 1, CHLOROPLASTIC-RELATED"/>
    <property type="match status" value="1"/>
</dbReference>
<dbReference type="Pfam" id="PF00162">
    <property type="entry name" value="PGK"/>
    <property type="match status" value="1"/>
</dbReference>
<dbReference type="PIRSF" id="PIRSF000724">
    <property type="entry name" value="Pgk"/>
    <property type="match status" value="1"/>
</dbReference>
<dbReference type="PRINTS" id="PR00477">
    <property type="entry name" value="PHGLYCKINASE"/>
</dbReference>
<dbReference type="SUPFAM" id="SSF53748">
    <property type="entry name" value="Phosphoglycerate kinase"/>
    <property type="match status" value="1"/>
</dbReference>
<dbReference type="PROSITE" id="PS00111">
    <property type="entry name" value="PGLYCERATE_KINASE"/>
    <property type="match status" value="1"/>
</dbReference>